<feature type="chain" id="PRO_0000281458" description="tRNA/tmRNA (uracil-C(5))-methyltransferase">
    <location>
        <begin position="1"/>
        <end position="366"/>
    </location>
</feature>
<feature type="active site" description="Nucleophile" evidence="1">
    <location>
        <position position="324"/>
    </location>
</feature>
<feature type="active site" description="Proton acceptor" evidence="1">
    <location>
        <position position="358"/>
    </location>
</feature>
<feature type="binding site" evidence="1">
    <location>
        <position position="190"/>
    </location>
    <ligand>
        <name>S-adenosyl-L-methionine</name>
        <dbReference type="ChEBI" id="CHEBI:59789"/>
    </ligand>
</feature>
<feature type="binding site" evidence="1">
    <location>
        <position position="218"/>
    </location>
    <ligand>
        <name>S-adenosyl-L-methionine</name>
        <dbReference type="ChEBI" id="CHEBI:59789"/>
    </ligand>
</feature>
<feature type="binding site" evidence="1">
    <location>
        <position position="223"/>
    </location>
    <ligand>
        <name>S-adenosyl-L-methionine</name>
        <dbReference type="ChEBI" id="CHEBI:59789"/>
    </ligand>
</feature>
<feature type="binding site" evidence="1">
    <location>
        <position position="239"/>
    </location>
    <ligand>
        <name>S-adenosyl-L-methionine</name>
        <dbReference type="ChEBI" id="CHEBI:59789"/>
    </ligand>
</feature>
<feature type="binding site" evidence="1">
    <location>
        <position position="299"/>
    </location>
    <ligand>
        <name>S-adenosyl-L-methionine</name>
        <dbReference type="ChEBI" id="CHEBI:59789"/>
    </ligand>
</feature>
<organism>
    <name type="scientific">Salmonella paratyphi A (strain ATCC 9150 / SARB42)</name>
    <dbReference type="NCBI Taxonomy" id="295319"/>
    <lineage>
        <taxon>Bacteria</taxon>
        <taxon>Pseudomonadati</taxon>
        <taxon>Pseudomonadota</taxon>
        <taxon>Gammaproteobacteria</taxon>
        <taxon>Enterobacterales</taxon>
        <taxon>Enterobacteriaceae</taxon>
        <taxon>Salmonella</taxon>
    </lineage>
</organism>
<proteinExistence type="inferred from homology"/>
<gene>
    <name evidence="1" type="primary">trmA</name>
    <name type="ordered locus">SPA3967</name>
</gene>
<accession>Q5PK68</accession>
<dbReference type="EC" id="2.1.1.-" evidence="1"/>
<dbReference type="EC" id="2.1.1.35" evidence="1"/>
<dbReference type="EMBL" id="CP000026">
    <property type="protein sequence ID" value="AAV79729.1"/>
    <property type="molecule type" value="Genomic_DNA"/>
</dbReference>
<dbReference type="RefSeq" id="WP_000186976.1">
    <property type="nucleotide sequence ID" value="NC_006511.1"/>
</dbReference>
<dbReference type="SMR" id="Q5PK68"/>
<dbReference type="KEGG" id="spt:SPA3967"/>
<dbReference type="HOGENOM" id="CLU_043022_0_0_6"/>
<dbReference type="Proteomes" id="UP000008185">
    <property type="component" value="Chromosome"/>
</dbReference>
<dbReference type="GO" id="GO:0005829">
    <property type="term" value="C:cytosol"/>
    <property type="evidence" value="ECO:0007669"/>
    <property type="project" value="TreeGrafter"/>
</dbReference>
<dbReference type="GO" id="GO:0019843">
    <property type="term" value="F:rRNA binding"/>
    <property type="evidence" value="ECO:0007669"/>
    <property type="project" value="TreeGrafter"/>
</dbReference>
<dbReference type="GO" id="GO:0030697">
    <property type="term" value="F:tRNA (uracil(54)-C5)-methyltransferase activity, S-adenosyl methionine-dependent"/>
    <property type="evidence" value="ECO:0007669"/>
    <property type="project" value="UniProtKB-UniRule"/>
</dbReference>
<dbReference type="GO" id="GO:0000049">
    <property type="term" value="F:tRNA binding"/>
    <property type="evidence" value="ECO:0007669"/>
    <property type="project" value="TreeGrafter"/>
</dbReference>
<dbReference type="GO" id="GO:0030488">
    <property type="term" value="P:tRNA methylation"/>
    <property type="evidence" value="ECO:0007669"/>
    <property type="project" value="UniProtKB-UniRule"/>
</dbReference>
<dbReference type="CDD" id="cd02440">
    <property type="entry name" value="AdoMet_MTases"/>
    <property type="match status" value="1"/>
</dbReference>
<dbReference type="FunFam" id="2.40.50.1070:FF:000001">
    <property type="entry name" value="tRNA/tmRNA (uracil-C(5))-methyltransferase"/>
    <property type="match status" value="1"/>
</dbReference>
<dbReference type="FunFam" id="3.40.50.150:FF:000012">
    <property type="entry name" value="tRNA/tmRNA (uracil-C(5))-methyltransferase"/>
    <property type="match status" value="1"/>
</dbReference>
<dbReference type="Gene3D" id="2.40.50.1070">
    <property type="match status" value="1"/>
</dbReference>
<dbReference type="Gene3D" id="3.40.50.150">
    <property type="entry name" value="Vaccinia Virus protein VP39"/>
    <property type="match status" value="1"/>
</dbReference>
<dbReference type="HAMAP" id="MF_01011">
    <property type="entry name" value="RNA_methyltr_TrmA"/>
    <property type="match status" value="1"/>
</dbReference>
<dbReference type="InterPro" id="IPR030390">
    <property type="entry name" value="MeTrfase_TrmA_AS"/>
</dbReference>
<dbReference type="InterPro" id="IPR030391">
    <property type="entry name" value="MeTrfase_TrmA_CS"/>
</dbReference>
<dbReference type="InterPro" id="IPR029063">
    <property type="entry name" value="SAM-dependent_MTases_sf"/>
</dbReference>
<dbReference type="InterPro" id="IPR011869">
    <property type="entry name" value="TrmA_MeTrfase"/>
</dbReference>
<dbReference type="InterPro" id="IPR010280">
    <property type="entry name" value="U5_MeTrfase_fam"/>
</dbReference>
<dbReference type="NCBIfam" id="TIGR02143">
    <property type="entry name" value="trmA_only"/>
    <property type="match status" value="1"/>
</dbReference>
<dbReference type="PANTHER" id="PTHR47790">
    <property type="entry name" value="TRNA/TMRNA (URACIL-C(5))-METHYLTRANSFERASE"/>
    <property type="match status" value="1"/>
</dbReference>
<dbReference type="PANTHER" id="PTHR47790:SF2">
    <property type="entry name" value="TRNA_TMRNA (URACIL-C(5))-METHYLTRANSFERASE"/>
    <property type="match status" value="1"/>
</dbReference>
<dbReference type="Pfam" id="PF05958">
    <property type="entry name" value="tRNA_U5-meth_tr"/>
    <property type="match status" value="1"/>
</dbReference>
<dbReference type="SUPFAM" id="SSF53335">
    <property type="entry name" value="S-adenosyl-L-methionine-dependent methyltransferases"/>
    <property type="match status" value="1"/>
</dbReference>
<dbReference type="PROSITE" id="PS51687">
    <property type="entry name" value="SAM_MT_RNA_M5U"/>
    <property type="match status" value="1"/>
</dbReference>
<dbReference type="PROSITE" id="PS01230">
    <property type="entry name" value="TRMA_1"/>
    <property type="match status" value="1"/>
</dbReference>
<dbReference type="PROSITE" id="PS01231">
    <property type="entry name" value="TRMA_2"/>
    <property type="match status" value="1"/>
</dbReference>
<comment type="function">
    <text evidence="1">Dual-specificity methyltransferase that catalyzes the formation of 5-methyluridine at position 54 (m5U54) in all tRNAs, and that of position 341 (m5U341) in tmRNA (transfer-mRNA).</text>
</comment>
<comment type="catalytic activity">
    <reaction evidence="1">
        <text>uridine(54) in tRNA + S-adenosyl-L-methionine = 5-methyluridine(54) in tRNA + S-adenosyl-L-homocysteine + H(+)</text>
        <dbReference type="Rhea" id="RHEA:42712"/>
        <dbReference type="Rhea" id="RHEA-COMP:10167"/>
        <dbReference type="Rhea" id="RHEA-COMP:10193"/>
        <dbReference type="ChEBI" id="CHEBI:15378"/>
        <dbReference type="ChEBI" id="CHEBI:57856"/>
        <dbReference type="ChEBI" id="CHEBI:59789"/>
        <dbReference type="ChEBI" id="CHEBI:65315"/>
        <dbReference type="ChEBI" id="CHEBI:74447"/>
        <dbReference type="EC" id="2.1.1.35"/>
    </reaction>
</comment>
<comment type="catalytic activity">
    <reaction evidence="1">
        <text>uridine(341) in tmRNA + S-adenosyl-L-methionine = 5-methyluridine(341) in tmRNA + S-adenosyl-L-homocysteine + H(+)</text>
        <dbReference type="Rhea" id="RHEA:43612"/>
        <dbReference type="Rhea" id="RHEA-COMP:10630"/>
        <dbReference type="Rhea" id="RHEA-COMP:10631"/>
        <dbReference type="ChEBI" id="CHEBI:15378"/>
        <dbReference type="ChEBI" id="CHEBI:57856"/>
        <dbReference type="ChEBI" id="CHEBI:59789"/>
        <dbReference type="ChEBI" id="CHEBI:65315"/>
        <dbReference type="ChEBI" id="CHEBI:74447"/>
    </reaction>
</comment>
<comment type="similarity">
    <text evidence="1">Belongs to the class I-like SAM-binding methyltransferase superfamily. RNA M5U methyltransferase family. TrmA subfamily.</text>
</comment>
<sequence length="366" mass="41878">MTPEHLPTEQYEAQLAEKVARLQSMMAPFSGLVPEVFRSPVSHYRMRAEFRLWHDGDDLYHIMFDQQTKSRIRVDTFPAASQLINTLMKAMIAGVRDNHALRHKLFQIDYLTTLSNQAVVSLLYHKKLDEEWREAATALRDALRAQGLNVHLIGRATKTKIELDQDYIDERLPVAGKEIIYRQVENSFTQPNAAMNIQMLEWALEVTKDSKGDLLELYCGNGNFSLALARNFNRVLATEIAKPSVAAAQYNIAANHIDNVQIIRMAAEEFTQAMNGVREFNRLQGIDLKRYQCETIFVDPPRSGLDSETEKMVQAYPRILYISCNPETLCKNLETLSQTHTVSRLALFDQFPYTHHMECGVLLTAR</sequence>
<protein>
    <recommendedName>
        <fullName evidence="1">tRNA/tmRNA (uracil-C(5))-methyltransferase</fullName>
        <ecNumber evidence="1">2.1.1.-</ecNumber>
        <ecNumber evidence="1">2.1.1.35</ecNumber>
    </recommendedName>
    <alternativeName>
        <fullName evidence="1">tRNA (uracil(54)-C(5))-methyltransferase</fullName>
    </alternativeName>
    <alternativeName>
        <fullName evidence="1">tRNA(m5U54)-methyltransferase</fullName>
        <shortName evidence="1">RUMT</shortName>
    </alternativeName>
    <alternativeName>
        <fullName evidence="1">tmRNA (uracil(341)-C(5))-methyltransferase</fullName>
    </alternativeName>
</protein>
<reference key="1">
    <citation type="journal article" date="2004" name="Nat. Genet.">
        <title>Comparison of genome degradation in Paratyphi A and Typhi, human-restricted serovars of Salmonella enterica that cause typhoid.</title>
        <authorList>
            <person name="McClelland M."/>
            <person name="Sanderson K.E."/>
            <person name="Clifton S.W."/>
            <person name="Latreille P."/>
            <person name="Porwollik S."/>
            <person name="Sabo A."/>
            <person name="Meyer R."/>
            <person name="Bieri T."/>
            <person name="Ozersky P."/>
            <person name="McLellan M."/>
            <person name="Harkins C.R."/>
            <person name="Wang C."/>
            <person name="Nguyen C."/>
            <person name="Berghoff A."/>
            <person name="Elliott G."/>
            <person name="Kohlberg S."/>
            <person name="Strong C."/>
            <person name="Du F."/>
            <person name="Carter J."/>
            <person name="Kremizki C."/>
            <person name="Layman D."/>
            <person name="Leonard S."/>
            <person name="Sun H."/>
            <person name="Fulton L."/>
            <person name="Nash W."/>
            <person name="Miner T."/>
            <person name="Minx P."/>
            <person name="Delehaunty K."/>
            <person name="Fronick C."/>
            <person name="Magrini V."/>
            <person name="Nhan M."/>
            <person name="Warren W."/>
            <person name="Florea L."/>
            <person name="Spieth J."/>
            <person name="Wilson R.K."/>
        </authorList>
    </citation>
    <scope>NUCLEOTIDE SEQUENCE [LARGE SCALE GENOMIC DNA]</scope>
    <source>
        <strain>ATCC 9150 / SARB42</strain>
    </source>
</reference>
<evidence type="ECO:0000255" key="1">
    <source>
        <dbReference type="HAMAP-Rule" id="MF_01011"/>
    </source>
</evidence>
<name>TRMA_SALPA</name>
<keyword id="KW-0489">Methyltransferase</keyword>
<keyword id="KW-0949">S-adenosyl-L-methionine</keyword>
<keyword id="KW-0808">Transferase</keyword>
<keyword id="KW-0819">tRNA processing</keyword>